<name>LIN31_CAEEL</name>
<reference key="1">
    <citation type="journal article" date="1993" name="Genes Dev.">
        <title>lin-31, a Caenorhabditis elegans HNF-3/fork head transcription factor homolog, specifies three alternative cell fates in vulval development.</title>
        <authorList>
            <person name="Miller L.M."/>
            <person name="Gallegos M.E."/>
            <person name="Morisseau B.A."/>
            <person name="Kim S.K."/>
        </authorList>
    </citation>
    <scope>NUCLEOTIDE SEQUENCE [GENOMIC DNA]</scope>
    <source>
        <strain>Bristol N2</strain>
    </source>
</reference>
<reference key="2">
    <citation type="journal article" date="1998" name="Science">
        <title>Genome sequence of the nematode C. elegans: a platform for investigating biology.</title>
        <authorList>
            <consortium name="The C. elegans sequencing consortium"/>
        </authorList>
    </citation>
    <scope>NUCLEOTIDE SEQUENCE [LARGE SCALE GENOMIC DNA]</scope>
    <source>
        <strain>Bristol N2</strain>
    </source>
</reference>
<keyword id="KW-0217">Developmental protein</keyword>
<keyword id="KW-0238">DNA-binding</keyword>
<keyword id="KW-0539">Nucleus</keyword>
<keyword id="KW-1185">Reference proteome</keyword>
<keyword id="KW-0804">Transcription</keyword>
<keyword id="KW-0805">Transcription regulation</keyword>
<gene>
    <name type="primary">lin-31</name>
    <name type="ORF">K10G6.1</name>
</gene>
<protein>
    <recommendedName>
        <fullName>Protein lin-31</fullName>
    </recommendedName>
    <alternativeName>
        <fullName>Abnormal cell lineage protein 31</fullName>
    </alternativeName>
</protein>
<proteinExistence type="predicted"/>
<comment type="function">
    <text>Lin-31 regulates how vulval precursor cells choose their fate. It helps specify three alternative cell fates in vulval development.</text>
</comment>
<comment type="subcellular location">
    <subcellularLocation>
        <location evidence="3">Nucleus</location>
    </subcellularLocation>
</comment>
<organism>
    <name type="scientific">Caenorhabditis elegans</name>
    <dbReference type="NCBI Taxonomy" id="6239"/>
    <lineage>
        <taxon>Eukaryota</taxon>
        <taxon>Metazoa</taxon>
        <taxon>Ecdysozoa</taxon>
        <taxon>Nematoda</taxon>
        <taxon>Chromadorea</taxon>
        <taxon>Rhabditida</taxon>
        <taxon>Rhabditina</taxon>
        <taxon>Rhabditomorpha</taxon>
        <taxon>Rhabditoidea</taxon>
        <taxon>Rhabditidae</taxon>
        <taxon>Peloderinae</taxon>
        <taxon>Caenorhabditis</taxon>
    </lineage>
</organism>
<dbReference type="EMBL" id="L11148">
    <property type="protein sequence ID" value="AAA28104.1"/>
    <property type="molecule type" value="Genomic_DNA"/>
</dbReference>
<dbReference type="EMBL" id="FO081624">
    <property type="protein sequence ID" value="CCD72892.1"/>
    <property type="molecule type" value="Genomic_DNA"/>
</dbReference>
<dbReference type="PIR" id="A47368">
    <property type="entry name" value="A47368"/>
</dbReference>
<dbReference type="RefSeq" id="NP_494704.1">
    <property type="nucleotide sequence ID" value="NM_062303.5"/>
</dbReference>
<dbReference type="SMR" id="P34683"/>
<dbReference type="BioGRID" id="39096">
    <property type="interactions" value="3"/>
</dbReference>
<dbReference type="FunCoup" id="P34683">
    <property type="interactions" value="117"/>
</dbReference>
<dbReference type="IntAct" id="P34683">
    <property type="interactions" value="1"/>
</dbReference>
<dbReference type="MINT" id="P34683"/>
<dbReference type="STRING" id="6239.K10G6.1.1"/>
<dbReference type="PaxDb" id="6239-K10G6.1"/>
<dbReference type="EnsemblMetazoa" id="K10G6.1.1">
    <property type="protein sequence ID" value="K10G6.1.1"/>
    <property type="gene ID" value="WBGene00003017"/>
</dbReference>
<dbReference type="GeneID" id="173740"/>
<dbReference type="KEGG" id="cel:CELE_K10G6.1"/>
<dbReference type="UCSC" id="K10G6.1">
    <property type="organism name" value="c. elegans"/>
</dbReference>
<dbReference type="AGR" id="WB:WBGene00003017"/>
<dbReference type="CTD" id="173740"/>
<dbReference type="WormBase" id="K10G6.1">
    <property type="protein sequence ID" value="CE12098"/>
    <property type="gene ID" value="WBGene00003017"/>
    <property type="gene designation" value="lin-31"/>
</dbReference>
<dbReference type="eggNOG" id="KOG3562">
    <property type="taxonomic scope" value="Eukaryota"/>
</dbReference>
<dbReference type="GeneTree" id="ENSGT00940000161970"/>
<dbReference type="HOGENOM" id="CLU_040357_6_2_1"/>
<dbReference type="InParanoid" id="P34683"/>
<dbReference type="OMA" id="MAIQDSD"/>
<dbReference type="OrthoDB" id="5954824at2759"/>
<dbReference type="PRO" id="PR:P34683"/>
<dbReference type="Proteomes" id="UP000001940">
    <property type="component" value="Chromosome II"/>
</dbReference>
<dbReference type="Bgee" id="WBGene00003017">
    <property type="expression patterns" value="Expressed in material anatomical entity and 4 other cell types or tissues"/>
</dbReference>
<dbReference type="GO" id="GO:0005634">
    <property type="term" value="C:nucleus"/>
    <property type="evidence" value="ECO:0000314"/>
    <property type="project" value="WormBase"/>
</dbReference>
<dbReference type="GO" id="GO:0000981">
    <property type="term" value="F:DNA-binding transcription factor activity, RNA polymerase II-specific"/>
    <property type="evidence" value="ECO:0000318"/>
    <property type="project" value="GO_Central"/>
</dbReference>
<dbReference type="GO" id="GO:0000978">
    <property type="term" value="F:RNA polymerase II cis-regulatory region sequence-specific DNA binding"/>
    <property type="evidence" value="ECO:0000318"/>
    <property type="project" value="GO_Central"/>
</dbReference>
<dbReference type="GO" id="GO:0043565">
    <property type="term" value="F:sequence-specific DNA binding"/>
    <property type="evidence" value="ECO:0000314"/>
    <property type="project" value="WormBase"/>
</dbReference>
<dbReference type="GO" id="GO:0009653">
    <property type="term" value="P:anatomical structure morphogenesis"/>
    <property type="evidence" value="ECO:0000318"/>
    <property type="project" value="GO_Central"/>
</dbReference>
<dbReference type="GO" id="GO:0030154">
    <property type="term" value="P:cell differentiation"/>
    <property type="evidence" value="ECO:0000318"/>
    <property type="project" value="GO_Central"/>
</dbReference>
<dbReference type="GO" id="GO:0006357">
    <property type="term" value="P:regulation of transcription by RNA polymerase II"/>
    <property type="evidence" value="ECO:0000318"/>
    <property type="project" value="GO_Central"/>
</dbReference>
<dbReference type="GO" id="GO:0040025">
    <property type="term" value="P:vulval development"/>
    <property type="evidence" value="ECO:0000315"/>
    <property type="project" value="WormBase"/>
</dbReference>
<dbReference type="CDD" id="cd20016">
    <property type="entry name" value="FH_FOXB"/>
    <property type="match status" value="1"/>
</dbReference>
<dbReference type="FunFam" id="1.10.10.10:FF:000082">
    <property type="entry name" value="forkhead box protein B2"/>
    <property type="match status" value="1"/>
</dbReference>
<dbReference type="Gene3D" id="1.10.10.10">
    <property type="entry name" value="Winged helix-like DNA-binding domain superfamily/Winged helix DNA-binding domain"/>
    <property type="match status" value="1"/>
</dbReference>
<dbReference type="InterPro" id="IPR001766">
    <property type="entry name" value="Fork_head_dom"/>
</dbReference>
<dbReference type="InterPro" id="IPR050211">
    <property type="entry name" value="FOX_domain-containing"/>
</dbReference>
<dbReference type="InterPro" id="IPR018122">
    <property type="entry name" value="TF_fork_head_CS_1"/>
</dbReference>
<dbReference type="InterPro" id="IPR030456">
    <property type="entry name" value="TF_fork_head_CS_2"/>
</dbReference>
<dbReference type="InterPro" id="IPR036388">
    <property type="entry name" value="WH-like_DNA-bd_sf"/>
</dbReference>
<dbReference type="InterPro" id="IPR036390">
    <property type="entry name" value="WH_DNA-bd_sf"/>
</dbReference>
<dbReference type="PANTHER" id="PTHR11829:SF377">
    <property type="entry name" value="FORK HEAD DOMAIN-CONTAINING PROTEIN FD4-RELATED"/>
    <property type="match status" value="1"/>
</dbReference>
<dbReference type="PANTHER" id="PTHR11829">
    <property type="entry name" value="FORKHEAD BOX PROTEIN"/>
    <property type="match status" value="1"/>
</dbReference>
<dbReference type="Pfam" id="PF00250">
    <property type="entry name" value="Forkhead"/>
    <property type="match status" value="1"/>
</dbReference>
<dbReference type="PRINTS" id="PR00053">
    <property type="entry name" value="FORKHEAD"/>
</dbReference>
<dbReference type="SMART" id="SM00339">
    <property type="entry name" value="FH"/>
    <property type="match status" value="1"/>
</dbReference>
<dbReference type="SUPFAM" id="SSF46785">
    <property type="entry name" value="Winged helix' DNA-binding domain"/>
    <property type="match status" value="1"/>
</dbReference>
<dbReference type="PROSITE" id="PS00657">
    <property type="entry name" value="FORK_HEAD_1"/>
    <property type="match status" value="1"/>
</dbReference>
<dbReference type="PROSITE" id="PS00658">
    <property type="entry name" value="FORK_HEAD_2"/>
    <property type="match status" value="1"/>
</dbReference>
<dbReference type="PROSITE" id="PS50039">
    <property type="entry name" value="FORK_HEAD_3"/>
    <property type="match status" value="1"/>
</dbReference>
<accession>P34683</accession>
<evidence type="ECO:0000255" key="1">
    <source>
        <dbReference type="PROSITE-ProRule" id="PRU00089"/>
    </source>
</evidence>
<evidence type="ECO:0000256" key="2">
    <source>
        <dbReference type="SAM" id="MobiDB-lite"/>
    </source>
</evidence>
<evidence type="ECO:0000305" key="3"/>
<sequence length="237" mass="26896">MPRPGKDSYDEQKPPYSYIWLTYMAIQDSDDKMLPLTEIYKYIMDRFPFYRKNTQRWQNSLRHNLSFNDCFIKIPRRADRPGKGSYWAVHPNASGMFENGSCLRRRKRFRARGGQDDDDDDFHHPAPSKISRKNPLPLLPEPPITPPLLSSLFPNLPPSLPNFCLFPPGMDPTKSLLLNPLSLLLMPHFLKNSSNFESSTPHSETSEISGSGSSSSKTPTPEAGFNSSFSIESILSS</sequence>
<feature type="chain" id="PRO_0000091908" description="Protein lin-31">
    <location>
        <begin position="1"/>
        <end position="237"/>
    </location>
</feature>
<feature type="DNA-binding region" description="Fork-head" evidence="1">
    <location>
        <begin position="12"/>
        <end position="103"/>
    </location>
</feature>
<feature type="region of interest" description="Disordered" evidence="2">
    <location>
        <begin position="110"/>
        <end position="141"/>
    </location>
</feature>
<feature type="region of interest" description="Disordered" evidence="2">
    <location>
        <begin position="195"/>
        <end position="237"/>
    </location>
</feature>
<feature type="compositionally biased region" description="Low complexity" evidence="2">
    <location>
        <begin position="206"/>
        <end position="216"/>
    </location>
</feature>
<feature type="compositionally biased region" description="Low complexity" evidence="2">
    <location>
        <begin position="227"/>
        <end position="237"/>
    </location>
</feature>